<dbReference type="EMBL" id="AB017063">
    <property type="protein sequence ID" value="BAB08751.1"/>
    <property type="molecule type" value="Genomic_DNA"/>
</dbReference>
<dbReference type="EMBL" id="CP002688">
    <property type="protein sequence ID" value="AED96027.2"/>
    <property type="status" value="ALT_INIT"/>
    <property type="molecule type" value="Genomic_DNA"/>
</dbReference>
<dbReference type="RefSeq" id="NP_199918.2">
    <property type="nucleotide sequence ID" value="NM_124484.2"/>
</dbReference>
<dbReference type="SMR" id="Q9FI43"/>
<dbReference type="FunCoup" id="Q9FI43">
    <property type="interactions" value="1990"/>
</dbReference>
<dbReference type="STRING" id="3702.Q9FI43"/>
<dbReference type="PaxDb" id="3702-AT5G51050.1"/>
<dbReference type="ProteomicsDB" id="214332"/>
<dbReference type="GeneID" id="835178"/>
<dbReference type="KEGG" id="ath:AT5G51050"/>
<dbReference type="Araport" id="AT5G51050"/>
<dbReference type="TAIR" id="AT5G51050"/>
<dbReference type="eggNOG" id="KOG0036">
    <property type="taxonomic scope" value="Eukaryota"/>
</dbReference>
<dbReference type="HOGENOM" id="CLU_015166_2_1_1"/>
<dbReference type="InParanoid" id="Q9FI43"/>
<dbReference type="PhylomeDB" id="Q9FI43"/>
<dbReference type="PRO" id="PR:Q9FI43"/>
<dbReference type="Proteomes" id="UP000006548">
    <property type="component" value="Chromosome 5"/>
</dbReference>
<dbReference type="ExpressionAtlas" id="Q9FI43">
    <property type="expression patterns" value="baseline and differential"/>
</dbReference>
<dbReference type="GO" id="GO:0005743">
    <property type="term" value="C:mitochondrial inner membrane"/>
    <property type="evidence" value="ECO:0007669"/>
    <property type="project" value="UniProtKB-SubCell"/>
</dbReference>
<dbReference type="GO" id="GO:0005739">
    <property type="term" value="C:mitochondrion"/>
    <property type="evidence" value="ECO:0000314"/>
    <property type="project" value="TAIR"/>
</dbReference>
<dbReference type="GO" id="GO:0015217">
    <property type="term" value="F:ADP transmembrane transporter activity"/>
    <property type="evidence" value="ECO:0000314"/>
    <property type="project" value="UniProtKB"/>
</dbReference>
<dbReference type="GO" id="GO:0080122">
    <property type="term" value="F:AMP transmembrane transporter activity"/>
    <property type="evidence" value="ECO:0000314"/>
    <property type="project" value="TAIR"/>
</dbReference>
<dbReference type="GO" id="GO:0005347">
    <property type="term" value="F:ATP transmembrane transporter activity"/>
    <property type="evidence" value="ECO:0000314"/>
    <property type="project" value="UniProtKB"/>
</dbReference>
<dbReference type="GO" id="GO:0005509">
    <property type="term" value="F:calcium ion binding"/>
    <property type="evidence" value="ECO:0000314"/>
    <property type="project" value="TAIR"/>
</dbReference>
<dbReference type="GO" id="GO:0015085">
    <property type="term" value="F:calcium ion transmembrane transporter activity"/>
    <property type="evidence" value="ECO:0000314"/>
    <property type="project" value="UniProtKB"/>
</dbReference>
<dbReference type="GO" id="GO:0005315">
    <property type="term" value="F:phosphate transmembrane transporter activity"/>
    <property type="evidence" value="ECO:0000314"/>
    <property type="project" value="UniProtKB"/>
</dbReference>
<dbReference type="GO" id="GO:0015866">
    <property type="term" value="P:ADP transport"/>
    <property type="evidence" value="ECO:0000314"/>
    <property type="project" value="UniProtKB"/>
</dbReference>
<dbReference type="GO" id="GO:0080121">
    <property type="term" value="P:AMP transport"/>
    <property type="evidence" value="ECO:0000314"/>
    <property type="project" value="TAIR"/>
</dbReference>
<dbReference type="GO" id="GO:0015867">
    <property type="term" value="P:ATP transport"/>
    <property type="evidence" value="ECO:0000314"/>
    <property type="project" value="UniProtKB"/>
</dbReference>
<dbReference type="GO" id="GO:0070588">
    <property type="term" value="P:calcium ion transmembrane transport"/>
    <property type="evidence" value="ECO:0000314"/>
    <property type="project" value="UniProtKB"/>
</dbReference>
<dbReference type="GO" id="GO:0035435">
    <property type="term" value="P:phosphate ion transmembrane transport"/>
    <property type="evidence" value="ECO:0000314"/>
    <property type="project" value="UniProtKB"/>
</dbReference>
<dbReference type="FunFam" id="1.10.238.10:FF:000138">
    <property type="entry name" value="Calcium-binding mitochondrial carrier protein SCaMC-1"/>
    <property type="match status" value="1"/>
</dbReference>
<dbReference type="FunFam" id="1.10.238.10:FF:000456">
    <property type="entry name" value="Calcium-binding mitochondrial carrier protein SCaMC-2 isoform A"/>
    <property type="match status" value="1"/>
</dbReference>
<dbReference type="FunFam" id="1.50.40.10:FF:000067">
    <property type="entry name" value="Mitochondrial substrate carrier family protein"/>
    <property type="match status" value="1"/>
</dbReference>
<dbReference type="Gene3D" id="1.10.238.10">
    <property type="entry name" value="EF-hand"/>
    <property type="match status" value="1"/>
</dbReference>
<dbReference type="Gene3D" id="1.50.40.10">
    <property type="entry name" value="Mitochondrial carrier domain"/>
    <property type="match status" value="1"/>
</dbReference>
<dbReference type="InterPro" id="IPR011992">
    <property type="entry name" value="EF-hand-dom_pair"/>
</dbReference>
<dbReference type="InterPro" id="IPR018247">
    <property type="entry name" value="EF_Hand_1_Ca_BS"/>
</dbReference>
<dbReference type="InterPro" id="IPR002048">
    <property type="entry name" value="EF_hand_dom"/>
</dbReference>
<dbReference type="InterPro" id="IPR002067">
    <property type="entry name" value="Mit_carrier"/>
</dbReference>
<dbReference type="InterPro" id="IPR018108">
    <property type="entry name" value="Mitochondrial_sb/sol_carrier"/>
</dbReference>
<dbReference type="InterPro" id="IPR023395">
    <property type="entry name" value="Mt_carrier_dom_sf"/>
</dbReference>
<dbReference type="PANTHER" id="PTHR24089">
    <property type="entry name" value="SOLUTE CARRIER FAMILY 25"/>
    <property type="match status" value="1"/>
</dbReference>
<dbReference type="Pfam" id="PF13202">
    <property type="entry name" value="EF-hand_5"/>
    <property type="match status" value="1"/>
</dbReference>
<dbReference type="Pfam" id="PF13499">
    <property type="entry name" value="EF-hand_7"/>
    <property type="match status" value="1"/>
</dbReference>
<dbReference type="Pfam" id="PF00153">
    <property type="entry name" value="Mito_carr"/>
    <property type="match status" value="3"/>
</dbReference>
<dbReference type="PRINTS" id="PR00926">
    <property type="entry name" value="MITOCARRIER"/>
</dbReference>
<dbReference type="SMART" id="SM00054">
    <property type="entry name" value="EFh"/>
    <property type="match status" value="2"/>
</dbReference>
<dbReference type="SUPFAM" id="SSF47473">
    <property type="entry name" value="EF-hand"/>
    <property type="match status" value="1"/>
</dbReference>
<dbReference type="SUPFAM" id="SSF103506">
    <property type="entry name" value="Mitochondrial carrier"/>
    <property type="match status" value="1"/>
</dbReference>
<dbReference type="PROSITE" id="PS00018">
    <property type="entry name" value="EF_HAND_1"/>
    <property type="match status" value="1"/>
</dbReference>
<dbReference type="PROSITE" id="PS50222">
    <property type="entry name" value="EF_HAND_2"/>
    <property type="match status" value="4"/>
</dbReference>
<dbReference type="PROSITE" id="PS50920">
    <property type="entry name" value="SOLCAR"/>
    <property type="match status" value="3"/>
</dbReference>
<sequence length="487" mass="54506">MEATKSSKQNCCNPVKKPGPVSIDHVLLALRETREERDLRIRSLFSFFDSENVGYLDCAQIEKGLCALQIPSGYKYAKELFRVCDANRDGRVDYHEFRRYMDDKELELYRIFQAIDVEHNGCISPEGLWDSLVKAGIEIKDEELARFVEHVDKDNDGIIMFEEWRDFLLLYPHEATIENIYHHWERVCLVDIGEQAVIPEGISKHIKRSNYFIAGGIAGAASRTATAPLDRLKVLLQIQKTDARIREAIKLIWKQGGVRGFFRGNGLNIVKVAPESAIKFYAYELFKNAIGENMGEDKADIGTTVRLFAGGMAGAVAQASIYPLDLVKTRLQTYTSQAGVAVPRLGTLTKDILVHEGPRAFYKGLFPSLLGIIPYAGIDLAAYETLKDLSRTYILQDAEPGPLVQLGCGTISGALGATCVYPLQVVRTRMQAERARTSMSGVFRRTISEEGYRALYKGLLPNLLKVVPAASITYMVYEAMKKSLELD</sequence>
<name>MAPC2_ARATH</name>
<protein>
    <recommendedName>
        <fullName evidence="9">Calcium-dependent mitochondrial ATP-magnesium/phosphate carrier protein 2</fullName>
        <shortName evidence="10 11">AtAPC2</shortName>
        <shortName evidence="9 11">Mitochondrial ATP-Mg/Pi carrier protein 2</shortName>
    </recommendedName>
</protein>
<evidence type="ECO:0000255" key="1"/>
<evidence type="ECO:0000255" key="2">
    <source>
        <dbReference type="PROSITE-ProRule" id="PRU00282"/>
    </source>
</evidence>
<evidence type="ECO:0000255" key="3">
    <source>
        <dbReference type="PROSITE-ProRule" id="PRU00448"/>
    </source>
</evidence>
<evidence type="ECO:0000269" key="4">
    <source>
    </source>
</evidence>
<evidence type="ECO:0000269" key="5">
    <source>
    </source>
</evidence>
<evidence type="ECO:0000269" key="6">
    <source>
    </source>
</evidence>
<evidence type="ECO:0000269" key="7">
    <source>
    </source>
</evidence>
<evidence type="ECO:0000303" key="8">
    <source>
    </source>
</evidence>
<evidence type="ECO:0000303" key="9">
    <source>
    </source>
</evidence>
<evidence type="ECO:0000303" key="10">
    <source>
    </source>
</evidence>
<evidence type="ECO:0000303" key="11">
    <source>
    </source>
</evidence>
<evidence type="ECO:0000305" key="12"/>
<evidence type="ECO:0000305" key="13">
    <source>
    </source>
</evidence>
<evidence type="ECO:0000312" key="14">
    <source>
        <dbReference type="Araport" id="AT5G51050"/>
    </source>
</evidence>
<evidence type="ECO:0000312" key="15">
    <source>
        <dbReference type="EMBL" id="AED96027.2"/>
    </source>
</evidence>
<feature type="chain" id="PRO_0000447462" description="Calcium-dependent mitochondrial ATP-magnesium/phosphate carrier protein 2">
    <location>
        <begin position="1"/>
        <end position="487"/>
    </location>
</feature>
<feature type="topological domain" description="Mitochondrial intermembrane" evidence="13">
    <location>
        <begin position="1"/>
        <end position="211"/>
    </location>
</feature>
<feature type="transmembrane region" description="Helical; Name=1" evidence="1">
    <location>
        <begin position="212"/>
        <end position="229"/>
    </location>
</feature>
<feature type="topological domain" description="Mitochondrial matrix" evidence="13">
    <location>
        <begin position="230"/>
        <end position="263"/>
    </location>
</feature>
<feature type="transmembrane region" description="Helical; Name=2" evidence="1">
    <location>
        <begin position="264"/>
        <end position="283"/>
    </location>
</feature>
<feature type="topological domain" description="Mitochondrial intermembrane" evidence="13">
    <location>
        <begin position="284"/>
        <end position="310"/>
    </location>
</feature>
<feature type="transmembrane region" description="Helical; Name=3" evidence="1">
    <location>
        <begin position="311"/>
        <end position="324"/>
    </location>
</feature>
<feature type="topological domain" description="Mitochondrial matrix" evidence="13">
    <location>
        <begin position="325"/>
        <end position="363"/>
    </location>
</feature>
<feature type="transmembrane region" description="Helical; Name=4" evidence="1">
    <location>
        <begin position="364"/>
        <end position="383"/>
    </location>
</feature>
<feature type="topological domain" description="Mitochondrial intermembrane" evidence="13">
    <location>
        <begin position="384"/>
        <end position="405"/>
    </location>
</feature>
<feature type="transmembrane region" description="Helical; Name=5" evidence="1">
    <location>
        <begin position="406"/>
        <end position="423"/>
    </location>
</feature>
<feature type="topological domain" description="Mitochondrial matrix" evidence="13">
    <location>
        <begin position="424"/>
        <end position="457"/>
    </location>
</feature>
<feature type="transmembrane region" description="Helical; Name=6" evidence="1">
    <location>
        <begin position="458"/>
        <end position="477"/>
    </location>
</feature>
<feature type="topological domain" description="Mitochondrial intermembrane" evidence="13">
    <location>
        <begin position="478"/>
        <end position="487"/>
    </location>
</feature>
<feature type="domain" description="EF-hand 1" evidence="3">
    <location>
        <begin position="36"/>
        <end position="71"/>
    </location>
</feature>
<feature type="domain" description="EF-hand 2" evidence="3">
    <location>
        <begin position="72"/>
        <end position="107"/>
    </location>
</feature>
<feature type="domain" description="EF-hand 3" evidence="3">
    <location>
        <begin position="108"/>
        <end position="138"/>
    </location>
</feature>
<feature type="domain" description="EF-hand 4" evidence="3">
    <location>
        <begin position="139"/>
        <end position="174"/>
    </location>
</feature>
<feature type="repeat" description="Solcar 1" evidence="2">
    <location>
        <begin position="206"/>
        <end position="289"/>
    </location>
</feature>
<feature type="repeat" description="Solcar 2" evidence="2">
    <location>
        <begin position="301"/>
        <end position="389"/>
    </location>
</feature>
<feature type="repeat" description="Solcar 3" evidence="2">
    <location>
        <begin position="400"/>
        <end position="483"/>
    </location>
</feature>
<feature type="binding site" evidence="3">
    <location>
        <position position="85"/>
    </location>
    <ligand>
        <name>Ca(2+)</name>
        <dbReference type="ChEBI" id="CHEBI:29108"/>
        <label>1</label>
    </ligand>
</feature>
<feature type="binding site" evidence="3">
    <location>
        <position position="87"/>
    </location>
    <ligand>
        <name>Ca(2+)</name>
        <dbReference type="ChEBI" id="CHEBI:29108"/>
        <label>1</label>
    </ligand>
</feature>
<feature type="binding site" evidence="3">
    <location>
        <position position="89"/>
    </location>
    <ligand>
        <name>Ca(2+)</name>
        <dbReference type="ChEBI" id="CHEBI:29108"/>
        <label>1</label>
    </ligand>
</feature>
<feature type="binding site" evidence="3">
    <location>
        <position position="91"/>
    </location>
    <ligand>
        <name>Ca(2+)</name>
        <dbReference type="ChEBI" id="CHEBI:29108"/>
        <label>1</label>
    </ligand>
</feature>
<feature type="binding site" evidence="3">
    <location>
        <position position="96"/>
    </location>
    <ligand>
        <name>Ca(2+)</name>
        <dbReference type="ChEBI" id="CHEBI:29108"/>
        <label>1</label>
    </ligand>
</feature>
<feature type="binding site" evidence="12">
    <location>
        <position position="152"/>
    </location>
    <ligand>
        <name>Ca(2+)</name>
        <dbReference type="ChEBI" id="CHEBI:29108"/>
        <label>2</label>
    </ligand>
</feature>
<feature type="binding site" evidence="12">
    <location>
        <position position="154"/>
    </location>
    <ligand>
        <name>Ca(2+)</name>
        <dbReference type="ChEBI" id="CHEBI:29108"/>
        <label>2</label>
    </ligand>
</feature>
<feature type="binding site" evidence="12">
    <location>
        <position position="156"/>
    </location>
    <ligand>
        <name>Ca(2+)</name>
        <dbReference type="ChEBI" id="CHEBI:29108"/>
        <label>2</label>
    </ligand>
</feature>
<feature type="binding site" evidence="12">
    <location>
        <position position="163"/>
    </location>
    <ligand>
        <name>Ca(2+)</name>
        <dbReference type="ChEBI" id="CHEBI:29108"/>
        <label>2</label>
    </ligand>
</feature>
<organism>
    <name type="scientific">Arabidopsis thaliana</name>
    <name type="common">Mouse-ear cress</name>
    <dbReference type="NCBI Taxonomy" id="3702"/>
    <lineage>
        <taxon>Eukaryota</taxon>
        <taxon>Viridiplantae</taxon>
        <taxon>Streptophyta</taxon>
        <taxon>Embryophyta</taxon>
        <taxon>Tracheophyta</taxon>
        <taxon>Spermatophyta</taxon>
        <taxon>Magnoliopsida</taxon>
        <taxon>eudicotyledons</taxon>
        <taxon>Gunneridae</taxon>
        <taxon>Pentapetalae</taxon>
        <taxon>rosids</taxon>
        <taxon>malvids</taxon>
        <taxon>Brassicales</taxon>
        <taxon>Brassicaceae</taxon>
        <taxon>Camelineae</taxon>
        <taxon>Arabidopsis</taxon>
    </lineage>
</organism>
<comment type="function">
    <text evidence="4 5 6 7">Calcium-dependent mitochondrial carrier protein that catalyzes the import of ATP co-transported with metal divalent cations across the mitochondrial inner membrane in exchange for phosphate (Pi) (PubMed:22062157, PubMed:26140942, PubMed:26444389, PubMed:28695448). Can transport phosphate, AMP, ADP, ATP, adenosine 5'-phosphosulfate, sulfate and thiosulfate, and, to a lesser extent, other nucleotides (PubMed:26140942, PubMed:26444389). Binds calcium ions Ca(2+) (PubMed:22062157). Also mediates calcium uptake (PubMed:26444389).</text>
</comment>
<comment type="activity regulation">
    <text evidence="5 6 7">Counter-exchange transport activity is saturable and inhibited by pyridoxal-5'-phosphate, EDTA and EGTA (PubMed:26140942, PubMed:26444389). Activated by calcium Ca(2+) and manganese Mn(2+) ions, and slightly by iron Fe(2+) and zinc Zn(2+) ions (PubMed:26140942, PubMed:26444389, PubMed:28695448). Repressed by copper ions Cu(2+) and slightly by magnesium Mg(2+) ions (PubMed:28695448). Magnesium Mg(2+) ions promotes slightly ATP uptake, ATP-Mg(2+) being exchanged with ATP(4-) (PubMed:26444389).</text>
</comment>
<comment type="biophysicochemical properties">
    <kinetics>
        <KM evidence="5">0.74 mM for Pi</KM>
        <KM evidence="5">0.25 mM for AMP</KM>
        <KM evidence="5">0.16 mM for ADP</KM>
        <KM evidence="5">0.08 mM for ATP</KM>
        <KM evidence="6">374 uM for ADP (in the absence of calcium ions Ca(2+) but in the presence of ATP)</KM>
        <KM evidence="6">95 uM for ATP (in the absence of calcium ions Ca(2+) but in the presence of Pi)</KM>
        <KM evidence="6">508 uM for ADP (in the presence of calcium ions Ca(2+) and ATP)</KM>
        <KM evidence="6">59 uM for ATP (in the presence of calcium ions Ca(2+) and Pi)</KM>
        <Vmax evidence="5">380.0 umol/min/g enzyme with Pi as substrate</Vmax>
        <Vmax evidence="5">150.0 umol/min/g enzyme with AMP as substrate</Vmax>
        <Vmax evidence="5">350.0 umol/min/g enzyme with ADP as substrate</Vmax>
        <Vmax evidence="5">54.0 umol/min/g enzyme with ATP as substrate</Vmax>
        <Vmax evidence="6">778.0 nmol/h/mg enzyme with ADP as substrate (in the absence of calcium ions Ca(2+) but in the presence of ATP)</Vmax>
        <Vmax evidence="6">212.0 nmol/h/mg enzyme with ATP as substrate (in the absence of calcium ions Ca(2+) but in the presence of Pi)</Vmax>
        <Vmax evidence="6">1169.0 nmol/h/mg enzyme with ADP as substrate (in the presence of calcium ions Ca(2+) and ATP)</Vmax>
        <Vmax evidence="6">523.0 nmol/h/mg enzyme with ATP as substrate (in the presence of calcium ions Ca(2+) and Pi)</Vmax>
    </kinetics>
</comment>
<comment type="subcellular location">
    <subcellularLocation>
        <location evidence="4">Mitochondrion inner membrane</location>
        <topology evidence="1">Multi-pass membrane protein</topology>
    </subcellularLocation>
</comment>
<comment type="tissue specificity">
    <text evidence="5">Expressed in flowers, leaves, stems, roots and seedlings, mostly in aerial parts.</text>
</comment>
<comment type="developmental stage">
    <text evidence="5">Slightly expressed in flower petals.</text>
</comment>
<comment type="domain">
    <text evidence="4">The N-terminal domain can bind calcium.</text>
</comment>
<comment type="similarity">
    <text evidence="12">Belongs to the mitochondrial carrier (TC 2.A.29) family.</text>
</comment>
<comment type="sequence caution" evidence="12">
    <conflict type="erroneous initiation">
        <sequence resource="EMBL-CDS" id="AED96027"/>
    </conflict>
    <text>Extended N-terminus.</text>
</comment>
<gene>
    <name evidence="8 9" type="primary">APC2</name>
    <name evidence="14" type="ordered locus">At5g51050</name>
    <name evidence="15" type="ORF">K3K7.23</name>
</gene>
<proteinExistence type="evidence at protein level"/>
<keyword id="KW-0106">Calcium</keyword>
<keyword id="KW-0472">Membrane</keyword>
<keyword id="KW-0479">Metal-binding</keyword>
<keyword id="KW-0496">Mitochondrion</keyword>
<keyword id="KW-0999">Mitochondrion inner membrane</keyword>
<keyword id="KW-1185">Reference proteome</keyword>
<keyword id="KW-0677">Repeat</keyword>
<keyword id="KW-0812">Transmembrane</keyword>
<keyword id="KW-1133">Transmembrane helix</keyword>
<keyword id="KW-0813">Transport</keyword>
<reference key="1">
    <citation type="journal article" date="1999" name="DNA Res.">
        <title>Structural analysis of Arabidopsis thaliana chromosome 5. IX. Sequence features of the regions of 1,011,550 bp covered by seventeen P1 and TAC clones.</title>
        <authorList>
            <person name="Kaneko T."/>
            <person name="Katoh T."/>
            <person name="Sato S."/>
            <person name="Nakamura Y."/>
            <person name="Asamizu E."/>
            <person name="Kotani H."/>
            <person name="Miyajima N."/>
            <person name="Tabata S."/>
        </authorList>
    </citation>
    <scope>NUCLEOTIDE SEQUENCE [LARGE SCALE GENOMIC DNA]</scope>
    <source>
        <strain>cv. Columbia</strain>
    </source>
</reference>
<reference key="2">
    <citation type="journal article" date="2017" name="Plant J.">
        <title>Araport11: a complete reannotation of the Arabidopsis thaliana reference genome.</title>
        <authorList>
            <person name="Cheng C.Y."/>
            <person name="Krishnakumar V."/>
            <person name="Chan A.P."/>
            <person name="Thibaud-Nissen F."/>
            <person name="Schobel S."/>
            <person name="Town C.D."/>
        </authorList>
    </citation>
    <scope>GENOME REANNOTATION</scope>
    <source>
        <strain>cv. Columbia</strain>
    </source>
</reference>
<reference key="3">
    <citation type="journal article" date="2002" name="Genome Biol.">
        <title>Analysis of EF-hand-containing proteins in Arabidopsis.</title>
        <authorList>
            <person name="Day I.S."/>
            <person name="Reddy V.S."/>
            <person name="Shad Ali G."/>
            <person name="Reddy A.S."/>
        </authorList>
    </citation>
    <scope>GENE FAMILY</scope>
</reference>
<reference key="4">
    <citation type="journal article" date="2004" name="Trends Plant Sci.">
        <title>The growing family of mitochondrial carriers in Arabidopsis.</title>
        <authorList>
            <person name="Picault N."/>
            <person name="Hodges M."/>
            <person name="Palmieri L."/>
            <person name="Palmieri F."/>
        </authorList>
    </citation>
    <scope>REVIEW</scope>
    <scope>GENE FAMILY</scope>
</reference>
<reference key="5">
    <citation type="journal article" date="2011" name="FEBS Lett.">
        <title>Arabidopsis calcium-binding mitochondrial carrier proteins as potential facilitators of mitochondrial ATP-import and plastid SAM-import.</title>
        <authorList>
            <person name="Stael S."/>
            <person name="Rocha A.G."/>
            <person name="Robinson A.J."/>
            <person name="Kmiecik P."/>
            <person name="Vothknecht U.C."/>
            <person name="Teige M."/>
        </authorList>
    </citation>
    <scope>FUNCTION</scope>
    <scope>SUBCELLULAR LOCATION</scope>
    <scope>TOPOLOGY</scope>
</reference>
<reference key="6">
    <citation type="journal article" date="2011" name="Plant J.">
        <title>Evolution, structure and function of mitochondrial carriers: a review with new insights.</title>
        <authorList>
            <person name="Palmieri F."/>
            <person name="Pierri C.L."/>
            <person name="De Grassi A."/>
            <person name="Nunes-Nesi A."/>
            <person name="Fernie A.R."/>
        </authorList>
    </citation>
    <scope>GENE FAMILY</scope>
</reference>
<reference key="7">
    <citation type="journal article" date="2015" name="Biochim. Biophys. Acta">
        <title>Functional characterization and organ distribution of three mitochondrial ATP-Mg/Pi carriers in Arabidopsis thaliana.</title>
        <authorList>
            <person name="Monne M."/>
            <person name="Miniero D.V."/>
            <person name="Obata T."/>
            <person name="Daddabbo L."/>
            <person name="Palmieri L."/>
            <person name="Vozza A."/>
            <person name="Nicolardi M.C."/>
            <person name="Fernie A.R."/>
            <person name="Palmieri F."/>
        </authorList>
    </citation>
    <scope>FUNCTION</scope>
    <scope>BIOPHYSICOCHEMICAL PROPERTIES</scope>
    <scope>TISSUE SPECIFICITY</scope>
    <scope>DEVELOPMENTAL STAGE</scope>
    <scope>ACTIVITY REGULATION</scope>
    <source>
        <strain>cv. Columbia</strain>
    </source>
</reference>
<reference key="8">
    <citation type="journal article" date="2015" name="BMC Plant Biol.">
        <title>In vitro analyses of mitochondrial ATP/phosphate carriers from Arabidopsis thaliana revealed unexpected Ca(2+)-effects.</title>
        <authorList>
            <person name="Lorenz A."/>
            <person name="Lorenz M."/>
            <person name="Vothknecht U.C."/>
            <person name="Niopek-Witz S."/>
            <person name="Neuhaus H.E."/>
            <person name="Haferkamp I."/>
        </authorList>
    </citation>
    <scope>FUNCTION</scope>
    <scope>BIOPHYSICOCHEMICAL PROPERTIES</scope>
    <scope>ACTIVITY REGULATION</scope>
</reference>
<reference key="9">
    <citation type="journal article" date="2016" name="Biochim. Biophys. Acta">
        <title>Calcium regulation of mitochondrial carriers.</title>
        <authorList>
            <person name="Del Arco A."/>
            <person name="Contreras L."/>
            <person name="Pardo B."/>
            <person name="Satrustegui J."/>
        </authorList>
    </citation>
    <scope>REVIEW</scope>
</reference>
<reference key="10">
    <citation type="journal article" date="2017" name="J. Bioenerg. Biomembr.">
        <title>Mitochondrial ATP-Mg/phosphate carriers transport divalent inorganic cations in complex with ATP.</title>
        <authorList>
            <person name="Monne M."/>
            <person name="Daddabbo L."/>
            <person name="Giannossa L.C."/>
            <person name="Nicolardi M.C."/>
            <person name="Palmieri L."/>
            <person name="Miniero D.V."/>
            <person name="Mangone A."/>
            <person name="Palmieri F."/>
        </authorList>
    </citation>
    <scope>FUNCTION</scope>
    <scope>ACTIVITY REGULATION</scope>
</reference>
<accession>Q9FI43</accession>
<accession>F4KBU1</accession>